<keyword id="KW-0029">Amino-acid transport</keyword>
<keyword id="KW-0997">Cell inner membrane</keyword>
<keyword id="KW-1003">Cell membrane</keyword>
<keyword id="KW-0472">Membrane</keyword>
<keyword id="KW-1185">Reference proteome</keyword>
<keyword id="KW-0812">Transmembrane</keyword>
<keyword id="KW-1133">Transmembrane helix</keyword>
<keyword id="KW-0813">Transport</keyword>
<name>ALAE_SALTY</name>
<sequence length="149" mass="16605">MFSPQSRLRHAVADTFAMVVYCSVVNMLIEIFLSGMSFEQSLSSRLVAIPVNILIAWPYGVYRDLIMRVARKASPAGWAKNLADVLAYVTFQSPVYIIILLTVGAGWHQIVAAVSSNIVVSMLMGAVYGYFLDYCRRLFKVSSYHQAKA</sequence>
<organism>
    <name type="scientific">Salmonella typhimurium (strain LT2 / SGSC1412 / ATCC 700720)</name>
    <dbReference type="NCBI Taxonomy" id="99287"/>
    <lineage>
        <taxon>Bacteria</taxon>
        <taxon>Pseudomonadati</taxon>
        <taxon>Pseudomonadota</taxon>
        <taxon>Gammaproteobacteria</taxon>
        <taxon>Enterobacterales</taxon>
        <taxon>Enterobacteriaceae</taxon>
        <taxon>Salmonella</taxon>
    </lineage>
</organism>
<reference key="1">
    <citation type="journal article" date="2001" name="Nature">
        <title>Complete genome sequence of Salmonella enterica serovar Typhimurium LT2.</title>
        <authorList>
            <person name="McClelland M."/>
            <person name="Sanderson K.E."/>
            <person name="Spieth J."/>
            <person name="Clifton S.W."/>
            <person name="Latreille P."/>
            <person name="Courtney L."/>
            <person name="Porwollik S."/>
            <person name="Ali J."/>
            <person name="Dante M."/>
            <person name="Du F."/>
            <person name="Hou S."/>
            <person name="Layman D."/>
            <person name="Leonard S."/>
            <person name="Nguyen C."/>
            <person name="Scott K."/>
            <person name="Holmes A."/>
            <person name="Grewal N."/>
            <person name="Mulvaney E."/>
            <person name="Ryan E."/>
            <person name="Sun H."/>
            <person name="Florea L."/>
            <person name="Miller W."/>
            <person name="Stoneking T."/>
            <person name="Nhan M."/>
            <person name="Waterston R."/>
            <person name="Wilson R.K."/>
        </authorList>
    </citation>
    <scope>NUCLEOTIDE SEQUENCE [LARGE SCALE GENOMIC DNA]</scope>
    <source>
        <strain>LT2 / SGSC1412 / ATCC 700720</strain>
    </source>
</reference>
<evidence type="ECO:0000255" key="1">
    <source>
        <dbReference type="HAMAP-Rule" id="MF_00914"/>
    </source>
</evidence>
<gene>
    <name evidence="1" type="primary">alaE</name>
    <name type="ordered locus">STM2800</name>
</gene>
<protein>
    <recommendedName>
        <fullName evidence="1">L-alanine exporter AlaE</fullName>
    </recommendedName>
</protein>
<proteinExistence type="inferred from homology"/>
<accession>Q8ZML6</accession>
<feature type="chain" id="PRO_0000415629" description="L-alanine exporter AlaE">
    <location>
        <begin position="1"/>
        <end position="149"/>
    </location>
</feature>
<feature type="transmembrane region" description="Helical" evidence="1">
    <location>
        <begin position="16"/>
        <end position="36"/>
    </location>
</feature>
<feature type="transmembrane region" description="Helical" evidence="1">
    <location>
        <begin position="46"/>
        <end position="66"/>
    </location>
</feature>
<feature type="transmembrane region" description="Helical" evidence="1">
    <location>
        <begin position="83"/>
        <end position="105"/>
    </location>
</feature>
<feature type="transmembrane region" description="Helical" evidence="1">
    <location>
        <begin position="115"/>
        <end position="135"/>
    </location>
</feature>
<dbReference type="EMBL" id="AE006468">
    <property type="protein sequence ID" value="AAL21685.1"/>
    <property type="molecule type" value="Genomic_DNA"/>
</dbReference>
<dbReference type="RefSeq" id="NP_461726.1">
    <property type="nucleotide sequence ID" value="NC_003197.2"/>
</dbReference>
<dbReference type="RefSeq" id="WP_000492669.1">
    <property type="nucleotide sequence ID" value="NC_003197.2"/>
</dbReference>
<dbReference type="STRING" id="99287.STM2800"/>
<dbReference type="PaxDb" id="99287-STM2800"/>
<dbReference type="GeneID" id="1254323"/>
<dbReference type="KEGG" id="stm:STM2800"/>
<dbReference type="PATRIC" id="fig|99287.12.peg.2957"/>
<dbReference type="HOGENOM" id="CLU_126493_0_0_6"/>
<dbReference type="OMA" id="ADWHQIA"/>
<dbReference type="PhylomeDB" id="Q8ZML6"/>
<dbReference type="BioCyc" id="SENT99287:STM2800-MONOMER"/>
<dbReference type="Proteomes" id="UP000001014">
    <property type="component" value="Chromosome"/>
</dbReference>
<dbReference type="GO" id="GO:0005886">
    <property type="term" value="C:plasma membrane"/>
    <property type="evidence" value="ECO:0007669"/>
    <property type="project" value="UniProtKB-SubCell"/>
</dbReference>
<dbReference type="GO" id="GO:0034639">
    <property type="term" value="F:L-amino acid efflux transmembrane transporter activity"/>
    <property type="evidence" value="ECO:0007669"/>
    <property type="project" value="UniProtKB-UniRule"/>
</dbReference>
<dbReference type="GO" id="GO:0032973">
    <property type="term" value="P:amino acid export across plasma membrane"/>
    <property type="evidence" value="ECO:0007669"/>
    <property type="project" value="UniProtKB-UniRule"/>
</dbReference>
<dbReference type="HAMAP" id="MF_00914">
    <property type="entry name" value="L_Ala_exporter"/>
    <property type="match status" value="1"/>
</dbReference>
<dbReference type="InterPro" id="IPR010574">
    <property type="entry name" value="Ala_export_AlaE"/>
</dbReference>
<dbReference type="Pfam" id="PF06610">
    <property type="entry name" value="AlaE"/>
    <property type="match status" value="1"/>
</dbReference>
<comment type="function">
    <text evidence="1">Exports L-alanine.</text>
</comment>
<comment type="subcellular location">
    <subcellularLocation>
        <location evidence="1">Cell inner membrane</location>
        <topology evidence="1">Multi-pass membrane protein</topology>
    </subcellularLocation>
</comment>
<comment type="similarity">
    <text evidence="1">Belongs to the AlaE exporter family.</text>
</comment>